<reference key="1">
    <citation type="journal article" date="2008" name="Antimicrob. Agents Chemother.">
        <title>Mutated response regulator graR is responsible for phenotypic conversion of Staphylococcus aureus from heterogeneous vancomycin-intermediate resistance to vancomycin-intermediate resistance.</title>
        <authorList>
            <person name="Neoh H.-M."/>
            <person name="Cui L."/>
            <person name="Yuzawa H."/>
            <person name="Takeuchi F."/>
            <person name="Matsuo M."/>
            <person name="Hiramatsu K."/>
        </authorList>
    </citation>
    <scope>NUCLEOTIDE SEQUENCE [LARGE SCALE GENOMIC DNA]</scope>
    <source>
        <strain>Mu3 / ATCC 700698</strain>
    </source>
</reference>
<reference key="2">
    <citation type="journal article" date="2004" name="Antimicrob. Agents Chemother.">
        <title>TcaA inactivation increases glycopeptide resistance in Staphylococcus aureus.</title>
        <authorList>
            <person name="Maki H."/>
            <person name="McCallum N."/>
            <person name="Bischoff M."/>
            <person name="Wada A."/>
            <person name="Berger-Baechi B."/>
        </authorList>
    </citation>
    <scope>FUNCTION</scope>
    <scope>DISRUPTION PHENOTYPE</scope>
</reference>
<comment type="function">
    <text evidence="3">Plays a major role in decreasing resistance to glycopeptide antibiotics.</text>
</comment>
<comment type="subcellular location">
    <subcellularLocation>
        <location evidence="1">Cell membrane</location>
        <topology evidence="1">Single-pass membrane protein</topology>
    </subcellularLocation>
</comment>
<comment type="disruption phenotype">
    <text evidence="3">Increased resistance to teicoplanin and vancomycin.</text>
</comment>
<comment type="similarity">
    <text evidence="4">Belongs to the TcaA family.</text>
</comment>
<sequence length="460" mass="52131">MKSCPKCGQQAQDDVQICTQCGHKFDSRQALYRKSTDEDIQTNNIKMRKMVPWAIGFFILILIIILFFLLRNFNSPEAQTKILVNAIENNDKQKVATLLSTKDNKVDSEEAKVYINYIKDEVGLKQFVSDLKNTVHKLNKSKTSVASYIQTRSGQNILRVSKNGTRYIFFDNMSFTAPTKQPIVKPKEKTKYEFKSGGKKKMVIAEANKVTPIGNFILGTYRIPAMKSTENGDFAGYLKFDFRQSNSETVDVTEDFEEANITVTLKGDTKLNDSSKKVTINDREMAFSSSKTYGPYPQNKDITISASGKAKGKTFTTQTKTIKASDLKYNTEITLNFDSEDIEDYVEKKEKEENSLKNKLIEFFAGYSLANNAAFNQSDFDFVSSYIKKGSSFYDDVKKRVSKGSLMMISSPQIIDAEKHGDKITATVRLINENGKQVDKEYELEQGSQDRLQLIKTSEK</sequence>
<feature type="chain" id="PRO_0000333165" description="Membrane-associated protein TcaA">
    <location>
        <begin position="1"/>
        <end position="460"/>
    </location>
</feature>
<feature type="topological domain" description="Cytoplasmic" evidence="2">
    <location>
        <begin position="1"/>
        <end position="49"/>
    </location>
</feature>
<feature type="transmembrane region" description="Helical" evidence="2">
    <location>
        <begin position="50"/>
        <end position="70"/>
    </location>
</feature>
<feature type="topological domain" description="Extracellular" evidence="2">
    <location>
        <begin position="71"/>
        <end position="460"/>
    </location>
</feature>
<feature type="zinc finger region" description="C4-type" evidence="2">
    <location>
        <begin position="4"/>
        <end position="21"/>
    </location>
</feature>
<organism>
    <name type="scientific">Staphylococcus aureus (strain Mu3 / ATCC 700698)</name>
    <dbReference type="NCBI Taxonomy" id="418127"/>
    <lineage>
        <taxon>Bacteria</taxon>
        <taxon>Bacillati</taxon>
        <taxon>Bacillota</taxon>
        <taxon>Bacilli</taxon>
        <taxon>Bacillales</taxon>
        <taxon>Staphylococcaceae</taxon>
        <taxon>Staphylococcus</taxon>
    </lineage>
</organism>
<evidence type="ECO:0000250" key="1"/>
<evidence type="ECO:0000255" key="2"/>
<evidence type="ECO:0000269" key="3">
    <source>
    </source>
</evidence>
<evidence type="ECO:0000305" key="4"/>
<proteinExistence type="inferred from homology"/>
<keyword id="KW-0046">Antibiotic resistance</keyword>
<keyword id="KW-1003">Cell membrane</keyword>
<keyword id="KW-0472">Membrane</keyword>
<keyword id="KW-0479">Metal-binding</keyword>
<keyword id="KW-0812">Transmembrane</keyword>
<keyword id="KW-1133">Transmembrane helix</keyword>
<keyword id="KW-0862">Zinc</keyword>
<keyword id="KW-0863">Zinc-finger</keyword>
<accession>A7X5X6</accession>
<dbReference type="EMBL" id="AP009324">
    <property type="protein sequence ID" value="BAF79223.1"/>
    <property type="molecule type" value="Genomic_DNA"/>
</dbReference>
<dbReference type="RefSeq" id="WP_000833794.1">
    <property type="nucleotide sequence ID" value="NC_009782.1"/>
</dbReference>
<dbReference type="KEGG" id="saw:SAHV_2340"/>
<dbReference type="HOGENOM" id="CLU_047245_0_0_9"/>
<dbReference type="GO" id="GO:0005886">
    <property type="term" value="C:plasma membrane"/>
    <property type="evidence" value="ECO:0007669"/>
    <property type="project" value="UniProtKB-SubCell"/>
</dbReference>
<dbReference type="GO" id="GO:0008270">
    <property type="term" value="F:zinc ion binding"/>
    <property type="evidence" value="ECO:0007669"/>
    <property type="project" value="UniProtKB-KW"/>
</dbReference>
<dbReference type="GO" id="GO:0046677">
    <property type="term" value="P:response to antibiotic"/>
    <property type="evidence" value="ECO:0007669"/>
    <property type="project" value="UniProtKB-KW"/>
</dbReference>
<dbReference type="InterPro" id="IPR023599">
    <property type="entry name" value="Mem_prot_TcaA"/>
</dbReference>
<dbReference type="InterPro" id="IPR054529">
    <property type="entry name" value="TcaA_2nd"/>
</dbReference>
<dbReference type="InterPro" id="IPR054530">
    <property type="entry name" value="TcaA_4th"/>
</dbReference>
<dbReference type="PANTHER" id="PTHR40038">
    <property type="entry name" value="MEMBRANE-ASSOCIATED PROTEIN TCAA"/>
    <property type="match status" value="1"/>
</dbReference>
<dbReference type="PANTHER" id="PTHR40038:SF1">
    <property type="entry name" value="MEMBRANE-ASSOCIATED PROTEIN TCAA"/>
    <property type="match status" value="1"/>
</dbReference>
<dbReference type="Pfam" id="PF22813">
    <property type="entry name" value="TcaA_2nd"/>
    <property type="match status" value="1"/>
</dbReference>
<dbReference type="Pfam" id="PF22820">
    <property type="entry name" value="TcaA_3rd_4th"/>
    <property type="match status" value="1"/>
</dbReference>
<dbReference type="Pfam" id="PF22819">
    <property type="entry name" value="TcaA_5th"/>
    <property type="match status" value="1"/>
</dbReference>
<dbReference type="PIRSF" id="PIRSF032522">
    <property type="entry name" value="TcaA"/>
    <property type="match status" value="1"/>
</dbReference>
<gene>
    <name type="primary">tcaA</name>
    <name type="ordered locus">SAHV_2340</name>
</gene>
<name>TCAA_STAA1</name>
<protein>
    <recommendedName>
        <fullName>Membrane-associated protein TcaA</fullName>
    </recommendedName>
</protein>